<organism>
    <name type="scientific">Buchnera aphidicola subsp. Schizaphis graminum (strain Sg)</name>
    <dbReference type="NCBI Taxonomy" id="198804"/>
    <lineage>
        <taxon>Bacteria</taxon>
        <taxon>Pseudomonadati</taxon>
        <taxon>Pseudomonadota</taxon>
        <taxon>Gammaproteobacteria</taxon>
        <taxon>Enterobacterales</taxon>
        <taxon>Erwiniaceae</taxon>
        <taxon>Buchnera</taxon>
    </lineage>
</organism>
<keyword id="KW-1003">Cell membrane</keyword>
<keyword id="KW-0249">Electron transport</keyword>
<keyword id="KW-0449">Lipoprotein</keyword>
<keyword id="KW-0472">Membrane</keyword>
<keyword id="KW-0560">Oxidoreductase</keyword>
<keyword id="KW-0564">Palmitate</keyword>
<keyword id="KW-0679">Respiratory chain</keyword>
<keyword id="KW-0732">Signal</keyword>
<keyword id="KW-0812">Transmembrane</keyword>
<keyword id="KW-1133">Transmembrane helix</keyword>
<keyword id="KW-0813">Transport</keyword>
<evidence type="ECO:0000250" key="1"/>
<evidence type="ECO:0000255" key="2"/>
<evidence type="ECO:0000305" key="3"/>
<comment type="function">
    <text evidence="1">Cytochrome bo(3) ubiquinol terminal oxidase is the component of the aerobic respiratory chain of E.coli that predominates when cells are grown at high aeration. Has proton pump activity across the membrane in addition to electron transfer, pumping 2 protons/electron (By similarity).</text>
</comment>
<comment type="subunit">
    <text evidence="1">Heterooctamer of two A chains, two B chains, two C chains and two D chains.</text>
</comment>
<comment type="subcellular location">
    <subcellularLocation>
        <location evidence="1">Cell membrane</location>
        <topology evidence="1">Multi-pass membrane protein</topology>
    </subcellularLocation>
</comment>
<comment type="similarity">
    <text evidence="3">Belongs to the cytochrome c oxidase subunit 2 family.</text>
</comment>
<sequence length="290" mass="33730">MISINFNNFFKTLLLILIAFTLHGCDSILFNPHGIIAIQECSILLISFLIMLFVIIPVIFMTIYFSVKYRASNINAKYKPDWCDSKKIEIIVWTIPISIILFLAFVTWNYSHILDPKKSIISKYKPIKIDVVSLDWRWLFIYPEYHIATINEIMFPINRSIIFHITSNSVMNSFFIPSLGSQIYAMPGMMTTLNLMSNSPGKYKGISSNYSGKGFSNMKFTAISVLNIKDFENWIKKAQQSPKKLNKMSIFNIISLPNENHFIEYFSDVKKNLFYEIINQTYSKNKVFKH</sequence>
<protein>
    <recommendedName>
        <fullName>Cytochrome bo(3) ubiquinol oxidase subunit 2</fullName>
    </recommendedName>
    <alternativeName>
        <fullName>Cytochrome o ubiquinol oxidase subunit 2</fullName>
        <shortName>Cytochrome o subunit 2</shortName>
    </alternativeName>
    <alternativeName>
        <fullName>Oxidase bo(3) subunit 2</fullName>
    </alternativeName>
    <alternativeName>
        <fullName>Ubiquinol oxidase polypeptide II</fullName>
    </alternativeName>
    <alternativeName>
        <fullName>Ubiquinol oxidase subunit 2</fullName>
    </alternativeName>
</protein>
<gene>
    <name type="primary">cyoA</name>
    <name type="ordered locus">BUsg_456</name>
</gene>
<accession>Q8K993</accession>
<reference key="1">
    <citation type="journal article" date="2002" name="Science">
        <title>50 million years of genomic stasis in endosymbiotic bacteria.</title>
        <authorList>
            <person name="Tamas I."/>
            <person name="Klasson L."/>
            <person name="Canbaeck B."/>
            <person name="Naeslund A.K."/>
            <person name="Eriksson A.-S."/>
            <person name="Wernegreen J.J."/>
            <person name="Sandstroem J.P."/>
            <person name="Moran N.A."/>
            <person name="Andersson S.G.E."/>
        </authorList>
    </citation>
    <scope>NUCLEOTIDE SEQUENCE [LARGE SCALE GENOMIC DNA]</scope>
    <source>
        <strain>Sg</strain>
    </source>
</reference>
<name>CYOA_BUCAP</name>
<proteinExistence type="inferred from homology"/>
<feature type="signal peptide" evidence="2">
    <location>
        <begin position="1"/>
        <end position="24"/>
    </location>
</feature>
<feature type="chain" id="PRO_0000006073" description="Cytochrome bo(3) ubiquinol oxidase subunit 2">
    <location>
        <begin position="25"/>
        <end position="290"/>
    </location>
</feature>
<feature type="topological domain" description="Extracellular" evidence="2">
    <location>
        <begin position="25"/>
        <end position="42"/>
    </location>
</feature>
<feature type="transmembrane region" description="Helical" evidence="2">
    <location>
        <begin position="43"/>
        <end position="63"/>
    </location>
</feature>
<feature type="topological domain" description="Cytoplasmic" evidence="2">
    <location>
        <begin position="64"/>
        <end position="87"/>
    </location>
</feature>
<feature type="transmembrane region" description="Helical" evidence="2">
    <location>
        <begin position="88"/>
        <end position="108"/>
    </location>
</feature>
<feature type="topological domain" description="Extracellular" evidence="2">
    <location>
        <begin position="109"/>
        <end position="290"/>
    </location>
</feature>
<feature type="lipid moiety-binding region" description="N-palmitoyl cysteine" evidence="2">
    <location>
        <position position="25"/>
    </location>
</feature>
<feature type="lipid moiety-binding region" description="S-diacylglycerol cysteine" evidence="2">
    <location>
        <position position="25"/>
    </location>
</feature>
<dbReference type="EMBL" id="AE013218">
    <property type="protein sequence ID" value="AAM67999.1"/>
    <property type="molecule type" value="Genomic_DNA"/>
</dbReference>
<dbReference type="RefSeq" id="WP_011053966.1">
    <property type="nucleotide sequence ID" value="NC_004061.1"/>
</dbReference>
<dbReference type="SMR" id="Q8K993"/>
<dbReference type="STRING" id="198804.BUsg_456"/>
<dbReference type="GeneID" id="93003927"/>
<dbReference type="KEGG" id="bas:BUsg_456"/>
<dbReference type="eggNOG" id="COG1622">
    <property type="taxonomic scope" value="Bacteria"/>
</dbReference>
<dbReference type="HOGENOM" id="CLU_036876_6_1_6"/>
<dbReference type="Proteomes" id="UP000000416">
    <property type="component" value="Chromosome"/>
</dbReference>
<dbReference type="GO" id="GO:0005886">
    <property type="term" value="C:plasma membrane"/>
    <property type="evidence" value="ECO:0007669"/>
    <property type="project" value="UniProtKB-SubCell"/>
</dbReference>
<dbReference type="GO" id="GO:0005507">
    <property type="term" value="F:copper ion binding"/>
    <property type="evidence" value="ECO:0007669"/>
    <property type="project" value="InterPro"/>
</dbReference>
<dbReference type="GO" id="GO:0009486">
    <property type="term" value="F:cytochrome bo3 ubiquinol oxidase activity"/>
    <property type="evidence" value="ECO:0007669"/>
    <property type="project" value="InterPro"/>
</dbReference>
<dbReference type="GO" id="GO:0004129">
    <property type="term" value="F:cytochrome-c oxidase activity"/>
    <property type="evidence" value="ECO:0007669"/>
    <property type="project" value="InterPro"/>
</dbReference>
<dbReference type="GO" id="GO:0016682">
    <property type="term" value="F:oxidoreductase activity, acting on diphenols and related substances as donors, oxygen as acceptor"/>
    <property type="evidence" value="ECO:0007669"/>
    <property type="project" value="InterPro"/>
</dbReference>
<dbReference type="GO" id="GO:0042773">
    <property type="term" value="P:ATP synthesis coupled electron transport"/>
    <property type="evidence" value="ECO:0007669"/>
    <property type="project" value="TreeGrafter"/>
</dbReference>
<dbReference type="CDD" id="cd04212">
    <property type="entry name" value="CuRO_UO_II"/>
    <property type="match status" value="1"/>
</dbReference>
<dbReference type="Gene3D" id="1.10.287.90">
    <property type="match status" value="1"/>
</dbReference>
<dbReference type="Gene3D" id="2.60.40.420">
    <property type="entry name" value="Cupredoxins - blue copper proteins"/>
    <property type="match status" value="1"/>
</dbReference>
<dbReference type="InterPro" id="IPR045187">
    <property type="entry name" value="CcO_II"/>
</dbReference>
<dbReference type="InterPro" id="IPR002429">
    <property type="entry name" value="CcO_II-like_C"/>
</dbReference>
<dbReference type="InterPro" id="IPR010514">
    <property type="entry name" value="COX_ARM"/>
</dbReference>
<dbReference type="InterPro" id="IPR008972">
    <property type="entry name" value="Cupredoxin"/>
</dbReference>
<dbReference type="InterPro" id="IPR034227">
    <property type="entry name" value="CuRO_UO_II"/>
</dbReference>
<dbReference type="InterPro" id="IPR011759">
    <property type="entry name" value="Cyt_c_oxidase_su2_TM_dom"/>
</dbReference>
<dbReference type="InterPro" id="IPR036257">
    <property type="entry name" value="Cyt_c_oxidase_su2_TM_sf"/>
</dbReference>
<dbReference type="InterPro" id="IPR006333">
    <property type="entry name" value="Cyt_o_ubiquinol_oxidase_su2"/>
</dbReference>
<dbReference type="NCBIfam" id="TIGR01433">
    <property type="entry name" value="CyoA"/>
    <property type="match status" value="1"/>
</dbReference>
<dbReference type="PANTHER" id="PTHR22888:SF18">
    <property type="entry name" value="CYTOCHROME BO(3) UBIQUINOL OXIDASE SUBUNIT 2"/>
    <property type="match status" value="1"/>
</dbReference>
<dbReference type="PANTHER" id="PTHR22888">
    <property type="entry name" value="CYTOCHROME C OXIDASE, SUBUNIT II"/>
    <property type="match status" value="1"/>
</dbReference>
<dbReference type="Pfam" id="PF00116">
    <property type="entry name" value="COX2"/>
    <property type="match status" value="1"/>
</dbReference>
<dbReference type="Pfam" id="PF06481">
    <property type="entry name" value="COX_ARM"/>
    <property type="match status" value="1"/>
</dbReference>
<dbReference type="PIRSF" id="PIRSF000292">
    <property type="entry name" value="Ubi_od_II"/>
    <property type="match status" value="1"/>
</dbReference>
<dbReference type="SUPFAM" id="SSF49503">
    <property type="entry name" value="Cupredoxins"/>
    <property type="match status" value="1"/>
</dbReference>
<dbReference type="SUPFAM" id="SSF81464">
    <property type="entry name" value="Cytochrome c oxidase subunit II-like, transmembrane region"/>
    <property type="match status" value="1"/>
</dbReference>
<dbReference type="PROSITE" id="PS50857">
    <property type="entry name" value="COX2_CUA"/>
    <property type="match status" value="1"/>
</dbReference>
<dbReference type="PROSITE" id="PS50999">
    <property type="entry name" value="COX2_TM"/>
    <property type="match status" value="1"/>
</dbReference>